<feature type="chain" id="PRO_1000071267" description="Peptide chain release factor 1">
    <location>
        <begin position="1"/>
        <end position="362"/>
    </location>
</feature>
<feature type="region of interest" description="Disordered" evidence="2">
    <location>
        <begin position="289"/>
        <end position="308"/>
    </location>
</feature>
<feature type="modified residue" description="N5-methylglutamine" evidence="1">
    <location>
        <position position="237"/>
    </location>
</feature>
<keyword id="KW-0963">Cytoplasm</keyword>
<keyword id="KW-0488">Methylation</keyword>
<keyword id="KW-0648">Protein biosynthesis</keyword>
<sequence length="362" mass="40221">MKASILSKLESLVERYEEVQHLLGDPTVIGDQNKFRALSKEYSQLEEITQCFQAYQQAKEDLVAAEEMAQEDDAEMREMAQDEIKAAKAAIERLTDELQILLLPKDPNDDRNCFLEIRAGAGGDEAGIFAGDLFRMYSRFAEKKGWRIEVMSSSEAEHGGYKEMIAKVNGDGAYGTLKFESGGHRVQRVPATEAQGRIHTSACTVAVMPEIPEAEIPEIKASDLKIDTFRSSGAGGQHVNTTDSAIRITHLPTGIVVECQDERSQHKNKAKAMSVLAARIAQAEESKRAAEISDTRRNLLGSGDRSDRIRTYNYPQGRVSDHRINLTVYRLTEVMEGDMQSLIDPVIHEHQADQLAALADQN</sequence>
<proteinExistence type="inferred from homology"/>
<gene>
    <name evidence="1" type="primary">prfA</name>
    <name type="ordered locus">VC0395_A1756</name>
    <name type="ordered locus">VC395_2293</name>
</gene>
<protein>
    <recommendedName>
        <fullName evidence="1">Peptide chain release factor 1</fullName>
        <shortName evidence="1">RF-1</shortName>
    </recommendedName>
</protein>
<reference key="1">
    <citation type="submission" date="2007-03" db="EMBL/GenBank/DDBJ databases">
        <authorList>
            <person name="Heidelberg J."/>
        </authorList>
    </citation>
    <scope>NUCLEOTIDE SEQUENCE [LARGE SCALE GENOMIC DNA]</scope>
    <source>
        <strain>ATCC 39541 / Classical Ogawa 395 / O395</strain>
    </source>
</reference>
<reference key="2">
    <citation type="journal article" date="2008" name="PLoS ONE">
        <title>A recalibrated molecular clock and independent origins for the cholera pandemic clones.</title>
        <authorList>
            <person name="Feng L."/>
            <person name="Reeves P.R."/>
            <person name="Lan R."/>
            <person name="Ren Y."/>
            <person name="Gao C."/>
            <person name="Zhou Z."/>
            <person name="Ren Y."/>
            <person name="Cheng J."/>
            <person name="Wang W."/>
            <person name="Wang J."/>
            <person name="Qian W."/>
            <person name="Li D."/>
            <person name="Wang L."/>
        </authorList>
    </citation>
    <scope>NUCLEOTIDE SEQUENCE [LARGE SCALE GENOMIC DNA]</scope>
    <source>
        <strain>ATCC 39541 / Classical Ogawa 395 / O395</strain>
    </source>
</reference>
<dbReference type="EMBL" id="CP000627">
    <property type="protein sequence ID" value="ABQ20878.1"/>
    <property type="molecule type" value="Genomic_DNA"/>
</dbReference>
<dbReference type="EMBL" id="CP001235">
    <property type="protein sequence ID" value="ACP10285.1"/>
    <property type="molecule type" value="Genomic_DNA"/>
</dbReference>
<dbReference type="RefSeq" id="WP_000647701.1">
    <property type="nucleotide sequence ID" value="NZ_JAACZH010000001.1"/>
</dbReference>
<dbReference type="SMR" id="A5F696"/>
<dbReference type="GeneID" id="89513845"/>
<dbReference type="KEGG" id="vco:VC0395_A1756"/>
<dbReference type="KEGG" id="vcr:VC395_2293"/>
<dbReference type="PATRIC" id="fig|345073.21.peg.2210"/>
<dbReference type="eggNOG" id="COG0216">
    <property type="taxonomic scope" value="Bacteria"/>
</dbReference>
<dbReference type="HOGENOM" id="CLU_036856_0_1_6"/>
<dbReference type="OrthoDB" id="9806673at2"/>
<dbReference type="Proteomes" id="UP000000249">
    <property type="component" value="Chromosome 2"/>
</dbReference>
<dbReference type="GO" id="GO:0005737">
    <property type="term" value="C:cytoplasm"/>
    <property type="evidence" value="ECO:0007669"/>
    <property type="project" value="UniProtKB-SubCell"/>
</dbReference>
<dbReference type="GO" id="GO:0016149">
    <property type="term" value="F:translation release factor activity, codon specific"/>
    <property type="evidence" value="ECO:0007669"/>
    <property type="project" value="UniProtKB-UniRule"/>
</dbReference>
<dbReference type="FunFam" id="3.30.160.20:FF:000004">
    <property type="entry name" value="Peptide chain release factor 1"/>
    <property type="match status" value="1"/>
</dbReference>
<dbReference type="FunFam" id="3.30.70.1660:FF:000002">
    <property type="entry name" value="Peptide chain release factor 1"/>
    <property type="match status" value="1"/>
</dbReference>
<dbReference type="FunFam" id="3.30.70.1660:FF:000004">
    <property type="entry name" value="Peptide chain release factor 1"/>
    <property type="match status" value="1"/>
</dbReference>
<dbReference type="Gene3D" id="3.30.160.20">
    <property type="match status" value="1"/>
</dbReference>
<dbReference type="Gene3D" id="3.30.70.1660">
    <property type="match status" value="1"/>
</dbReference>
<dbReference type="Gene3D" id="6.10.140.1950">
    <property type="match status" value="1"/>
</dbReference>
<dbReference type="HAMAP" id="MF_00093">
    <property type="entry name" value="Rel_fac_1"/>
    <property type="match status" value="1"/>
</dbReference>
<dbReference type="InterPro" id="IPR005139">
    <property type="entry name" value="PCRF"/>
</dbReference>
<dbReference type="InterPro" id="IPR000352">
    <property type="entry name" value="Pep_chain_release_fac_I"/>
</dbReference>
<dbReference type="InterPro" id="IPR045853">
    <property type="entry name" value="Pep_chain_release_fac_I_sf"/>
</dbReference>
<dbReference type="InterPro" id="IPR050057">
    <property type="entry name" value="Prokaryotic/Mito_RF"/>
</dbReference>
<dbReference type="InterPro" id="IPR004373">
    <property type="entry name" value="RF-1"/>
</dbReference>
<dbReference type="NCBIfam" id="TIGR00019">
    <property type="entry name" value="prfA"/>
    <property type="match status" value="1"/>
</dbReference>
<dbReference type="NCBIfam" id="NF001859">
    <property type="entry name" value="PRK00591.1"/>
    <property type="match status" value="1"/>
</dbReference>
<dbReference type="PANTHER" id="PTHR43804">
    <property type="entry name" value="LD18447P"/>
    <property type="match status" value="1"/>
</dbReference>
<dbReference type="PANTHER" id="PTHR43804:SF7">
    <property type="entry name" value="LD18447P"/>
    <property type="match status" value="1"/>
</dbReference>
<dbReference type="Pfam" id="PF03462">
    <property type="entry name" value="PCRF"/>
    <property type="match status" value="1"/>
</dbReference>
<dbReference type="Pfam" id="PF00472">
    <property type="entry name" value="RF-1"/>
    <property type="match status" value="1"/>
</dbReference>
<dbReference type="SMART" id="SM00937">
    <property type="entry name" value="PCRF"/>
    <property type="match status" value="1"/>
</dbReference>
<dbReference type="SUPFAM" id="SSF75620">
    <property type="entry name" value="Release factor"/>
    <property type="match status" value="1"/>
</dbReference>
<dbReference type="PROSITE" id="PS00745">
    <property type="entry name" value="RF_PROK_I"/>
    <property type="match status" value="1"/>
</dbReference>
<accession>A5F696</accession>
<accession>C3M3D6</accession>
<evidence type="ECO:0000255" key="1">
    <source>
        <dbReference type="HAMAP-Rule" id="MF_00093"/>
    </source>
</evidence>
<evidence type="ECO:0000256" key="2">
    <source>
        <dbReference type="SAM" id="MobiDB-lite"/>
    </source>
</evidence>
<comment type="function">
    <text evidence="1">Peptide chain release factor 1 directs the termination of translation in response to the peptide chain termination codons UAG and UAA.</text>
</comment>
<comment type="subcellular location">
    <subcellularLocation>
        <location evidence="1">Cytoplasm</location>
    </subcellularLocation>
</comment>
<comment type="PTM">
    <text evidence="1">Methylated by PrmC. Methylation increases the termination efficiency of RF1.</text>
</comment>
<comment type="similarity">
    <text evidence="1">Belongs to the prokaryotic/mitochondrial release factor family.</text>
</comment>
<organism>
    <name type="scientific">Vibrio cholerae serotype O1 (strain ATCC 39541 / Classical Ogawa 395 / O395)</name>
    <dbReference type="NCBI Taxonomy" id="345073"/>
    <lineage>
        <taxon>Bacteria</taxon>
        <taxon>Pseudomonadati</taxon>
        <taxon>Pseudomonadota</taxon>
        <taxon>Gammaproteobacteria</taxon>
        <taxon>Vibrionales</taxon>
        <taxon>Vibrionaceae</taxon>
        <taxon>Vibrio</taxon>
    </lineage>
</organism>
<name>RF1_VIBC3</name>